<dbReference type="EMBL" id="CP000781">
    <property type="protein sequence ID" value="ABS67168.1"/>
    <property type="molecule type" value="Genomic_DNA"/>
</dbReference>
<dbReference type="SMR" id="A7IGM5"/>
<dbReference type="STRING" id="78245.Xaut_1923"/>
<dbReference type="KEGG" id="xau:Xaut_1923"/>
<dbReference type="eggNOG" id="COG0230">
    <property type="taxonomic scope" value="Bacteria"/>
</dbReference>
<dbReference type="HOGENOM" id="CLU_129938_2_0_5"/>
<dbReference type="OrthoDB" id="9804164at2"/>
<dbReference type="PhylomeDB" id="A7IGM5"/>
<dbReference type="Proteomes" id="UP000002417">
    <property type="component" value="Chromosome"/>
</dbReference>
<dbReference type="GO" id="GO:1990904">
    <property type="term" value="C:ribonucleoprotein complex"/>
    <property type="evidence" value="ECO:0007669"/>
    <property type="project" value="UniProtKB-KW"/>
</dbReference>
<dbReference type="GO" id="GO:0005840">
    <property type="term" value="C:ribosome"/>
    <property type="evidence" value="ECO:0007669"/>
    <property type="project" value="UniProtKB-KW"/>
</dbReference>
<dbReference type="GO" id="GO:0003735">
    <property type="term" value="F:structural constituent of ribosome"/>
    <property type="evidence" value="ECO:0007669"/>
    <property type="project" value="InterPro"/>
</dbReference>
<dbReference type="GO" id="GO:0006412">
    <property type="term" value="P:translation"/>
    <property type="evidence" value="ECO:0007669"/>
    <property type="project" value="UniProtKB-UniRule"/>
</dbReference>
<dbReference type="FunFam" id="1.10.287.3980:FF:000001">
    <property type="entry name" value="Mitochondrial ribosomal protein L34"/>
    <property type="match status" value="1"/>
</dbReference>
<dbReference type="Gene3D" id="1.10.287.3980">
    <property type="match status" value="1"/>
</dbReference>
<dbReference type="HAMAP" id="MF_00391">
    <property type="entry name" value="Ribosomal_bL34"/>
    <property type="match status" value="1"/>
</dbReference>
<dbReference type="InterPro" id="IPR000271">
    <property type="entry name" value="Ribosomal_bL34"/>
</dbReference>
<dbReference type="InterPro" id="IPR020939">
    <property type="entry name" value="Ribosomal_bL34_CS"/>
</dbReference>
<dbReference type="NCBIfam" id="TIGR01030">
    <property type="entry name" value="rpmH_bact"/>
    <property type="match status" value="1"/>
</dbReference>
<dbReference type="PANTHER" id="PTHR14503:SF4">
    <property type="entry name" value="LARGE RIBOSOMAL SUBUNIT PROTEIN BL34M"/>
    <property type="match status" value="1"/>
</dbReference>
<dbReference type="PANTHER" id="PTHR14503">
    <property type="entry name" value="MITOCHONDRIAL RIBOSOMAL PROTEIN 34 FAMILY MEMBER"/>
    <property type="match status" value="1"/>
</dbReference>
<dbReference type="Pfam" id="PF00468">
    <property type="entry name" value="Ribosomal_L34"/>
    <property type="match status" value="1"/>
</dbReference>
<dbReference type="PROSITE" id="PS00784">
    <property type="entry name" value="RIBOSOMAL_L34"/>
    <property type="match status" value="1"/>
</dbReference>
<reference key="1">
    <citation type="submission" date="2007-07" db="EMBL/GenBank/DDBJ databases">
        <title>Complete sequence of chromosome of Xanthobacter autotrophicus Py2.</title>
        <authorList>
            <consortium name="US DOE Joint Genome Institute"/>
            <person name="Copeland A."/>
            <person name="Lucas S."/>
            <person name="Lapidus A."/>
            <person name="Barry K."/>
            <person name="Glavina del Rio T."/>
            <person name="Hammon N."/>
            <person name="Israni S."/>
            <person name="Dalin E."/>
            <person name="Tice H."/>
            <person name="Pitluck S."/>
            <person name="Sims D."/>
            <person name="Brettin T."/>
            <person name="Bruce D."/>
            <person name="Detter J.C."/>
            <person name="Han C."/>
            <person name="Tapia R."/>
            <person name="Brainard J."/>
            <person name="Schmutz J."/>
            <person name="Larimer F."/>
            <person name="Land M."/>
            <person name="Hauser L."/>
            <person name="Kyrpides N."/>
            <person name="Kim E."/>
            <person name="Ensigns S.A."/>
            <person name="Richardson P."/>
        </authorList>
    </citation>
    <scope>NUCLEOTIDE SEQUENCE [LARGE SCALE GENOMIC DNA]</scope>
    <source>
        <strain>ATCC BAA-1158 / Py2</strain>
    </source>
</reference>
<gene>
    <name evidence="1" type="primary">rpmH</name>
    <name type="ordered locus">Xaut_1923</name>
</gene>
<protein>
    <recommendedName>
        <fullName evidence="1">Large ribosomal subunit protein bL34</fullName>
    </recommendedName>
    <alternativeName>
        <fullName evidence="2">50S ribosomal protein L34</fullName>
    </alternativeName>
</protein>
<comment type="similarity">
    <text evidence="1">Belongs to the bacterial ribosomal protein bL34 family.</text>
</comment>
<sequence length="44" mass="5288">MKRTYQPSKLVRKRRHGFRARMATRNGRKIIAARRNHGRQRLSA</sequence>
<evidence type="ECO:0000255" key="1">
    <source>
        <dbReference type="HAMAP-Rule" id="MF_00391"/>
    </source>
</evidence>
<evidence type="ECO:0000305" key="2"/>
<organism>
    <name type="scientific">Xanthobacter autotrophicus (strain ATCC BAA-1158 / Py2)</name>
    <dbReference type="NCBI Taxonomy" id="78245"/>
    <lineage>
        <taxon>Bacteria</taxon>
        <taxon>Pseudomonadati</taxon>
        <taxon>Pseudomonadota</taxon>
        <taxon>Alphaproteobacteria</taxon>
        <taxon>Hyphomicrobiales</taxon>
        <taxon>Xanthobacteraceae</taxon>
        <taxon>Xanthobacter</taxon>
    </lineage>
</organism>
<proteinExistence type="inferred from homology"/>
<name>RL34_XANP2</name>
<accession>A7IGM5</accession>
<feature type="chain" id="PRO_1000196143" description="Large ribosomal subunit protein bL34">
    <location>
        <begin position="1"/>
        <end position="44"/>
    </location>
</feature>
<keyword id="KW-1185">Reference proteome</keyword>
<keyword id="KW-0687">Ribonucleoprotein</keyword>
<keyword id="KW-0689">Ribosomal protein</keyword>